<accession>Q5IAB6</accession>
<accession>A4H205</accession>
<accession>Q30KM0</accession>
<reference key="1">
    <citation type="journal article" date="2005" name="Physiol. Genomics">
        <title>Cross-species analysis of the mammalian beta-defensin gene family: presence of syntenic gene clusters and preferential expression in the male reproductive tract.</title>
        <authorList>
            <person name="Patil A.A."/>
            <person name="Cai Y."/>
            <person name="Sang Y."/>
            <person name="Blecha F."/>
            <person name="Zhang G."/>
        </authorList>
    </citation>
    <scope>NUCLEOTIDE SEQUENCE [MRNA]</scope>
</reference>
<reference key="2">
    <citation type="submission" date="2006-11" db="EMBL/GenBank/DDBJ databases">
        <title>Evolution and sequence variation of human beta-defensin genes.</title>
        <authorList>
            <person name="Hollox E.J."/>
            <person name="Armour J.A.L."/>
        </authorList>
    </citation>
    <scope>NUCLEOTIDE SEQUENCE [GENOMIC DNA]</scope>
</reference>
<reference key="3">
    <citation type="journal article" date="2005" name="BMC Evol. Biol.">
        <title>The complexity of selection at the major primate beta-defensin locus.</title>
        <authorList>
            <person name="Semple C.A.M."/>
            <person name="Maxwell A."/>
            <person name="Gautier P."/>
            <person name="Kilanowski F.M."/>
            <person name="Eastwood H."/>
            <person name="Barran P.E."/>
            <person name="Dorin J.R."/>
        </authorList>
    </citation>
    <scope>NUCLEOTIDE SEQUENCE [GENOMIC DNA] OF 25-77</scope>
</reference>
<sequence>MALIKKTFFFLFAMFFILVQLSSGCQAGLDFSQPFPSGEFAVCESCKLGRGKCRKECLENEKPDGNCRLNFLCCRQRI</sequence>
<dbReference type="EMBL" id="DQ012058">
    <property type="protein sequence ID" value="AAY59790.1"/>
    <property type="molecule type" value="mRNA"/>
</dbReference>
<dbReference type="EMBL" id="AM410110">
    <property type="protein sequence ID" value="CAL68925.1"/>
    <property type="molecule type" value="Genomic_DNA"/>
</dbReference>
<dbReference type="EMBL" id="AY831735">
    <property type="protein sequence ID" value="AAW32916.1"/>
    <property type="molecule type" value="Genomic_DNA"/>
</dbReference>
<dbReference type="RefSeq" id="NP_001123225.1">
    <property type="nucleotide sequence ID" value="NM_001129753.1"/>
</dbReference>
<dbReference type="SMR" id="Q5IAB6"/>
<dbReference type="FunCoup" id="Q5IAB6">
    <property type="interactions" value="1"/>
</dbReference>
<dbReference type="STRING" id="9598.ENSPTRP00000034193"/>
<dbReference type="PaxDb" id="9598-ENSPTRP00000034193"/>
<dbReference type="Ensembl" id="ENSPTRT00000036999.4">
    <property type="protein sequence ID" value="ENSPTRP00000034193.3"/>
    <property type="gene ID" value="ENSPTRG00000019960.5"/>
</dbReference>
<dbReference type="GeneID" id="736034"/>
<dbReference type="KEGG" id="ptr:736034"/>
<dbReference type="CTD" id="245908"/>
<dbReference type="eggNOG" id="ENOG502TE24">
    <property type="taxonomic scope" value="Eukaryota"/>
</dbReference>
<dbReference type="GeneTree" id="ENSGT00390000002317"/>
<dbReference type="HOGENOM" id="CLU_197691_0_0_1"/>
<dbReference type="InParanoid" id="Q5IAB6"/>
<dbReference type="OMA" id="CRRMCLE"/>
<dbReference type="OrthoDB" id="10366at9604"/>
<dbReference type="Proteomes" id="UP000002277">
    <property type="component" value="Unplaced"/>
</dbReference>
<dbReference type="Bgee" id="ENSPTRG00000019960">
    <property type="expression patterns" value="Expressed in prefrontal cortex"/>
</dbReference>
<dbReference type="GO" id="GO:0005576">
    <property type="term" value="C:extracellular region"/>
    <property type="evidence" value="ECO:0007669"/>
    <property type="project" value="UniProtKB-SubCell"/>
</dbReference>
<dbReference type="GO" id="GO:0042742">
    <property type="term" value="P:defense response to bacterium"/>
    <property type="evidence" value="ECO:0007669"/>
    <property type="project" value="UniProtKB-KW"/>
</dbReference>
<dbReference type="GO" id="GO:0045087">
    <property type="term" value="P:innate immune response"/>
    <property type="evidence" value="ECO:0007669"/>
    <property type="project" value="InterPro"/>
</dbReference>
<dbReference type="InterPro" id="IPR025933">
    <property type="entry name" value="Beta_defensin_dom"/>
</dbReference>
<dbReference type="Pfam" id="PF13841">
    <property type="entry name" value="Defensin_beta_2"/>
    <property type="match status" value="1"/>
</dbReference>
<feature type="signal peptide" evidence="2">
    <location>
        <begin position="1"/>
        <end position="27"/>
    </location>
</feature>
<feature type="peptide" id="PRO_0000006976" description="Beta-defensin 105A">
    <location>
        <begin position="28"/>
        <end position="78"/>
    </location>
</feature>
<feature type="disulfide bond" evidence="1">
    <location>
        <begin position="43"/>
        <end position="74"/>
    </location>
</feature>
<feature type="disulfide bond" evidence="1">
    <location>
        <begin position="53"/>
        <end position="67"/>
    </location>
</feature>
<feature type="disulfide bond" evidence="1">
    <location>
        <begin position="57"/>
        <end position="73"/>
    </location>
</feature>
<evidence type="ECO:0000250" key="1"/>
<evidence type="ECO:0000255" key="2"/>
<evidence type="ECO:0000305" key="3"/>
<comment type="function">
    <text evidence="1">Has antimicrobial activity.</text>
</comment>
<comment type="subcellular location">
    <subcellularLocation>
        <location evidence="1">Secreted</location>
    </subcellularLocation>
</comment>
<comment type="similarity">
    <text evidence="3">Belongs to the beta-defensin family.</text>
</comment>
<keyword id="KW-0044">Antibiotic</keyword>
<keyword id="KW-0929">Antimicrobial</keyword>
<keyword id="KW-0211">Defensin</keyword>
<keyword id="KW-1015">Disulfide bond</keyword>
<keyword id="KW-1185">Reference proteome</keyword>
<keyword id="KW-0964">Secreted</keyword>
<keyword id="KW-0732">Signal</keyword>
<organism>
    <name type="scientific">Pan troglodytes</name>
    <name type="common">Chimpanzee</name>
    <dbReference type="NCBI Taxonomy" id="9598"/>
    <lineage>
        <taxon>Eukaryota</taxon>
        <taxon>Metazoa</taxon>
        <taxon>Chordata</taxon>
        <taxon>Craniata</taxon>
        <taxon>Vertebrata</taxon>
        <taxon>Euteleostomi</taxon>
        <taxon>Mammalia</taxon>
        <taxon>Eutheria</taxon>
        <taxon>Euarchontoglires</taxon>
        <taxon>Primates</taxon>
        <taxon>Haplorrhini</taxon>
        <taxon>Catarrhini</taxon>
        <taxon>Hominidae</taxon>
        <taxon>Pan</taxon>
    </lineage>
</organism>
<proteinExistence type="inferred from homology"/>
<protein>
    <recommendedName>
        <fullName>Beta-defensin 105A</fullName>
    </recommendedName>
    <alternativeName>
        <fullName>Beta-defensin 5</fullName>
        <shortName>BD-5</shortName>
        <shortName>DEFB-5</shortName>
        <shortName>cBD-5</shortName>
    </alternativeName>
    <alternativeName>
        <fullName>Defensin, beta 105</fullName>
    </alternativeName>
    <alternativeName>
        <fullName>Defensin, beta 105A</fullName>
    </alternativeName>
</protein>
<name>D105A_PANTR</name>
<gene>
    <name type="primary">DEFB105A</name>
    <name type="synonym">DEFB105</name>
    <name type="synonym">DEFB5</name>
</gene>